<feature type="chain" id="PRO_0000462254" description="Replication restart protein PriC">
    <location>
        <begin position="1"/>
        <end position="176"/>
    </location>
</feature>
<reference evidence="5" key="1">
    <citation type="submission" date="2006-09" db="EMBL/GenBank/DDBJ databases">
        <authorList>
            <consortium name="The Klebsiella pneumonia Genome Sequencing Project"/>
            <person name="McClelland M."/>
            <person name="Sanderson E.K."/>
            <person name="Spieth J."/>
            <person name="Clifton W.S."/>
            <person name="Latreille P."/>
            <person name="Sabo A."/>
            <person name="Pepin K."/>
            <person name="Bhonagiri V."/>
            <person name="Porwollik S."/>
            <person name="Ali J."/>
            <person name="Wilson R.K."/>
        </authorList>
    </citation>
    <scope>NUCLEOTIDE SEQUENCE [LARGE SCALE GENOMIC DNA]</scope>
    <source>
        <strain>ATCC 700721 / MGH 78578</strain>
    </source>
</reference>
<reference key="2">
    <citation type="journal article" date="2016" name="Biochem. Biophys. Res. Commun.">
        <title>DnaT is a PriC-binding protein.</title>
        <authorList>
            <person name="Huang C.C."/>
            <person name="Huang C.Y."/>
        </authorList>
    </citation>
    <scope>INTERACTION WITH DNAT</scope>
    <scope>DNA-BINDING</scope>
    <source>
        <strain>ATCC 700721 / MGH 78578</strain>
    </source>
</reference>
<comment type="function">
    <text evidence="1 2">Involved in the restart of stalled replication forks, which reloads the DnaB replicative helicase on sites other than the origin of replication. Recognizes abandoned replication forks and remodels DNA single-stranded binding protein (SSB) on ssDNA to uncover a loading site for DnaB. There are several restart pathways, the PriA-PriC pathway is a minor restart pathway. Part of the minor PriC-Rep pathway for restart of stalled replication forks, which has a different substrate specificity than PriA. Part of the major restart pathway with PriA, PriB, DnaB, DnaT and DnaG primase. priB and priC have redundant roles in the cell (By similarity). Binds 7-9 nucleotides of single-stranded (ss)DNA (PubMed:27387236).</text>
</comment>
<comment type="subunit">
    <text evidence="1 2">Component of the replication restart primosome, which is composed of PriA, PriB, PriC, DnaB and DnaT; DnaG primase associates transiently with this complex (By similarity). Interacts with the C-terminus of SSB; this interaction is required to load the main replicative helicase onto substrate replication forks (By similarity). Interacts with helicase DnaB alone and in the DnaB-DnaC complex, probably 1:1 binding with DnaB (By similarity). Interacts with DnaT (PubMed:27387236).</text>
</comment>
<comment type="similarity">
    <text evidence="4">Belongs to the PriC family.</text>
</comment>
<dbReference type="EMBL" id="CP000647">
    <property type="protein sequence ID" value="ABR75901.1"/>
    <property type="molecule type" value="Genomic_DNA"/>
</dbReference>
<dbReference type="STRING" id="272620.KPN_00449"/>
<dbReference type="PaxDb" id="272620-KPN_00449"/>
<dbReference type="EnsemblBacteria" id="ABR75901">
    <property type="protein sequence ID" value="ABR75901"/>
    <property type="gene ID" value="KPN_00449"/>
</dbReference>
<dbReference type="KEGG" id="kpn:KPN_00449"/>
<dbReference type="HOGENOM" id="CLU_103284_0_0_6"/>
<dbReference type="Proteomes" id="UP000000265">
    <property type="component" value="Chromosome"/>
</dbReference>
<dbReference type="Gene3D" id="1.20.1270.340">
    <property type="match status" value="1"/>
</dbReference>
<dbReference type="InterPro" id="IPR038338">
    <property type="entry name" value="PriB/PriC_sf"/>
</dbReference>
<dbReference type="InterPro" id="IPR010890">
    <property type="entry name" value="Primosomal_replicat_PriB/PriC"/>
</dbReference>
<dbReference type="NCBIfam" id="NF007500">
    <property type="entry name" value="PRK10093.1"/>
    <property type="match status" value="1"/>
</dbReference>
<dbReference type="Pfam" id="PF07445">
    <property type="entry name" value="PriC"/>
    <property type="match status" value="1"/>
</dbReference>
<proteinExistence type="evidence at protein level"/>
<evidence type="ECO:0000250" key="1">
    <source>
        <dbReference type="UniProtKB" id="P23862"/>
    </source>
</evidence>
<evidence type="ECO:0000269" key="2">
    <source>
    </source>
</evidence>
<evidence type="ECO:0000303" key="3">
    <source>
    </source>
</evidence>
<evidence type="ECO:0000305" key="4"/>
<evidence type="ECO:0000312" key="5">
    <source>
        <dbReference type="EMBL" id="ABR75901.1"/>
    </source>
</evidence>
<organism>
    <name type="scientific">Klebsiella pneumoniae subsp. pneumoniae (strain ATCC 700721 / MGH 78578)</name>
    <dbReference type="NCBI Taxonomy" id="272620"/>
    <lineage>
        <taxon>Bacteria</taxon>
        <taxon>Pseudomonadati</taxon>
        <taxon>Pseudomonadota</taxon>
        <taxon>Gammaproteobacteria</taxon>
        <taxon>Enterobacterales</taxon>
        <taxon>Enterobacteriaceae</taxon>
        <taxon>Klebsiella/Raoultella group</taxon>
        <taxon>Klebsiella</taxon>
        <taxon>Klebsiella pneumoniae complex</taxon>
    </lineage>
</organism>
<protein>
    <recommendedName>
        <fullName evidence="3">Replication restart protein PriC</fullName>
    </recommendedName>
</protein>
<keyword id="KW-0235">DNA replication</keyword>
<keyword id="KW-0238">DNA-binding</keyword>
<keyword id="KW-0639">Primosome</keyword>
<sequence>MVKTAQLLQTLNDQLSELAALVAPLAEHATLSPRFDRQLFHTRSTLMQAYLAEAQHNFNQLRQAVERQQLPQVVWIAERLAAQIAALRRETATWSLRSWDHASPTLSRWQRRRLQHQEYERRLLAMRDQRQRQLAQATSLDEQQRLGKEVEAYSGRLARCRQALDKIENVLARLTR</sequence>
<gene>
    <name evidence="3" type="primary">priC</name>
    <name evidence="5" type="ORF">KPN_00449</name>
</gene>
<accession>A6T5N0</accession>
<name>PRIC_KLEP7</name>